<dbReference type="EC" id="3.1.2.6" evidence="1"/>
<dbReference type="EMBL" id="CP001252">
    <property type="protein sequence ID" value="ACK46826.1"/>
    <property type="molecule type" value="Genomic_DNA"/>
</dbReference>
<dbReference type="RefSeq" id="WP_012587760.1">
    <property type="nucleotide sequence ID" value="NC_011663.1"/>
</dbReference>
<dbReference type="SMR" id="B8E5A2"/>
<dbReference type="KEGG" id="sbp:Sbal223_2327"/>
<dbReference type="HOGENOM" id="CLU_030571_4_1_6"/>
<dbReference type="UniPathway" id="UPA00619">
    <property type="reaction ID" value="UER00676"/>
</dbReference>
<dbReference type="Proteomes" id="UP000002507">
    <property type="component" value="Chromosome"/>
</dbReference>
<dbReference type="GO" id="GO:0004416">
    <property type="term" value="F:hydroxyacylglutathione hydrolase activity"/>
    <property type="evidence" value="ECO:0007669"/>
    <property type="project" value="UniProtKB-UniRule"/>
</dbReference>
<dbReference type="GO" id="GO:0046872">
    <property type="term" value="F:metal ion binding"/>
    <property type="evidence" value="ECO:0007669"/>
    <property type="project" value="UniProtKB-KW"/>
</dbReference>
<dbReference type="GO" id="GO:0019243">
    <property type="term" value="P:methylglyoxal catabolic process to D-lactate via S-lactoyl-glutathione"/>
    <property type="evidence" value="ECO:0007669"/>
    <property type="project" value="InterPro"/>
</dbReference>
<dbReference type="CDD" id="cd07723">
    <property type="entry name" value="hydroxyacylglutathione_hydrolase_MBL-fold"/>
    <property type="match status" value="1"/>
</dbReference>
<dbReference type="Gene3D" id="3.60.15.10">
    <property type="entry name" value="Ribonuclease Z/Hydroxyacylglutathione hydrolase-like"/>
    <property type="match status" value="1"/>
</dbReference>
<dbReference type="HAMAP" id="MF_01374">
    <property type="entry name" value="Glyoxalase_2"/>
    <property type="match status" value="1"/>
</dbReference>
<dbReference type="InterPro" id="IPR035680">
    <property type="entry name" value="Clx_II_MBL"/>
</dbReference>
<dbReference type="InterPro" id="IPR050110">
    <property type="entry name" value="Glyoxalase_II_hydrolase"/>
</dbReference>
<dbReference type="InterPro" id="IPR032282">
    <property type="entry name" value="HAGH_C"/>
</dbReference>
<dbReference type="InterPro" id="IPR017782">
    <property type="entry name" value="Hydroxyacylglutathione_Hdrlase"/>
</dbReference>
<dbReference type="InterPro" id="IPR001279">
    <property type="entry name" value="Metallo-B-lactamas"/>
</dbReference>
<dbReference type="InterPro" id="IPR036866">
    <property type="entry name" value="RibonucZ/Hydroxyglut_hydro"/>
</dbReference>
<dbReference type="NCBIfam" id="TIGR03413">
    <property type="entry name" value="GSH_gloB"/>
    <property type="match status" value="1"/>
</dbReference>
<dbReference type="PANTHER" id="PTHR43705">
    <property type="entry name" value="HYDROXYACYLGLUTATHIONE HYDROLASE"/>
    <property type="match status" value="1"/>
</dbReference>
<dbReference type="PANTHER" id="PTHR43705:SF1">
    <property type="entry name" value="HYDROXYACYLGLUTATHIONE HYDROLASE GLOB"/>
    <property type="match status" value="1"/>
</dbReference>
<dbReference type="Pfam" id="PF16123">
    <property type="entry name" value="HAGH_C"/>
    <property type="match status" value="1"/>
</dbReference>
<dbReference type="Pfam" id="PF00753">
    <property type="entry name" value="Lactamase_B"/>
    <property type="match status" value="2"/>
</dbReference>
<dbReference type="PIRSF" id="PIRSF005457">
    <property type="entry name" value="Glx"/>
    <property type="match status" value="1"/>
</dbReference>
<dbReference type="SMART" id="SM00849">
    <property type="entry name" value="Lactamase_B"/>
    <property type="match status" value="1"/>
</dbReference>
<dbReference type="SUPFAM" id="SSF56281">
    <property type="entry name" value="Metallo-hydrolase/oxidoreductase"/>
    <property type="match status" value="1"/>
</dbReference>
<reference key="1">
    <citation type="submission" date="2008-12" db="EMBL/GenBank/DDBJ databases">
        <title>Complete sequence of chromosome of Shewanella baltica OS223.</title>
        <authorList>
            <consortium name="US DOE Joint Genome Institute"/>
            <person name="Lucas S."/>
            <person name="Copeland A."/>
            <person name="Lapidus A."/>
            <person name="Glavina del Rio T."/>
            <person name="Dalin E."/>
            <person name="Tice H."/>
            <person name="Bruce D."/>
            <person name="Goodwin L."/>
            <person name="Pitluck S."/>
            <person name="Chertkov O."/>
            <person name="Meincke L."/>
            <person name="Brettin T."/>
            <person name="Detter J.C."/>
            <person name="Han C."/>
            <person name="Kuske C.R."/>
            <person name="Larimer F."/>
            <person name="Land M."/>
            <person name="Hauser L."/>
            <person name="Kyrpides N."/>
            <person name="Ovchinnikova G."/>
            <person name="Brettar I."/>
            <person name="Rodrigues J."/>
            <person name="Konstantinidis K."/>
            <person name="Tiedje J."/>
        </authorList>
    </citation>
    <scope>NUCLEOTIDE SEQUENCE [LARGE SCALE GENOMIC DNA]</scope>
    <source>
        <strain>OS223</strain>
    </source>
</reference>
<gene>
    <name evidence="1" type="primary">gloB</name>
    <name type="ordered locus">Sbal223_2327</name>
</gene>
<keyword id="KW-0378">Hydrolase</keyword>
<keyword id="KW-0479">Metal-binding</keyword>
<keyword id="KW-0862">Zinc</keyword>
<protein>
    <recommendedName>
        <fullName evidence="1">Hydroxyacylglutathione hydrolase</fullName>
        <ecNumber evidence="1">3.1.2.6</ecNumber>
    </recommendedName>
    <alternativeName>
        <fullName evidence="1">Glyoxalase II</fullName>
        <shortName evidence="1">Glx II</shortName>
    </alternativeName>
</protein>
<name>GLO2_SHEB2</name>
<accession>B8E5A2</accession>
<organism>
    <name type="scientific">Shewanella baltica (strain OS223)</name>
    <dbReference type="NCBI Taxonomy" id="407976"/>
    <lineage>
        <taxon>Bacteria</taxon>
        <taxon>Pseudomonadati</taxon>
        <taxon>Pseudomonadota</taxon>
        <taxon>Gammaproteobacteria</taxon>
        <taxon>Alteromonadales</taxon>
        <taxon>Shewanellaceae</taxon>
        <taxon>Shewanella</taxon>
    </lineage>
</organism>
<comment type="function">
    <text evidence="1">Thiolesterase that catalyzes the hydrolysis of S-D-lactoyl-glutathione to form glutathione and D-lactic acid.</text>
</comment>
<comment type="catalytic activity">
    <reaction evidence="1">
        <text>an S-(2-hydroxyacyl)glutathione + H2O = a 2-hydroxy carboxylate + glutathione + H(+)</text>
        <dbReference type="Rhea" id="RHEA:21864"/>
        <dbReference type="ChEBI" id="CHEBI:15377"/>
        <dbReference type="ChEBI" id="CHEBI:15378"/>
        <dbReference type="ChEBI" id="CHEBI:57925"/>
        <dbReference type="ChEBI" id="CHEBI:58896"/>
        <dbReference type="ChEBI" id="CHEBI:71261"/>
        <dbReference type="EC" id="3.1.2.6"/>
    </reaction>
</comment>
<comment type="cofactor">
    <cofactor evidence="1">
        <name>Zn(2+)</name>
        <dbReference type="ChEBI" id="CHEBI:29105"/>
    </cofactor>
    <text evidence="1">Binds 2 Zn(2+) ions per subunit.</text>
</comment>
<comment type="pathway">
    <text evidence="1">Secondary metabolite metabolism; methylglyoxal degradation; (R)-lactate from methylglyoxal: step 2/2.</text>
</comment>
<comment type="subunit">
    <text evidence="1">Monomer.</text>
</comment>
<comment type="similarity">
    <text evidence="1">Belongs to the metallo-beta-lactamase superfamily. Glyoxalase II family.</text>
</comment>
<proteinExistence type="inferred from homology"/>
<sequence>MLTITAIKAFNDNYIWVLQQQPHTQVYVVDPGDASVVIDYLEANQLTLAGILLTHHHNDHTGGVAELQAYSQDRLTVYGPDNEKIEGITHPLNATAQPRLTLDYMSGELQVLDVPGHTAGHIAYVIADALFCGDTLFSGGCGRLFEGTPAQMLNSLQQLAQLPADTRVYCAHEYTFSNLKFALAVNPNNRALQDYNERAIALRRQDKATIPSTIALERAINPFLRASDTEIVDSIKQHFSDLNHANLDELGGFTLLRQWKDNF</sequence>
<evidence type="ECO:0000255" key="1">
    <source>
        <dbReference type="HAMAP-Rule" id="MF_01374"/>
    </source>
</evidence>
<feature type="chain" id="PRO_1000184184" description="Hydroxyacylglutathione hydrolase">
    <location>
        <begin position="1"/>
        <end position="263"/>
    </location>
</feature>
<feature type="binding site" evidence="1">
    <location>
        <position position="55"/>
    </location>
    <ligand>
        <name>Zn(2+)</name>
        <dbReference type="ChEBI" id="CHEBI:29105"/>
        <label>1</label>
    </ligand>
</feature>
<feature type="binding site" evidence="1">
    <location>
        <position position="57"/>
    </location>
    <ligand>
        <name>Zn(2+)</name>
        <dbReference type="ChEBI" id="CHEBI:29105"/>
        <label>1</label>
    </ligand>
</feature>
<feature type="binding site" evidence="1">
    <location>
        <position position="59"/>
    </location>
    <ligand>
        <name>Zn(2+)</name>
        <dbReference type="ChEBI" id="CHEBI:29105"/>
        <label>2</label>
    </ligand>
</feature>
<feature type="binding site" evidence="1">
    <location>
        <position position="60"/>
    </location>
    <ligand>
        <name>Zn(2+)</name>
        <dbReference type="ChEBI" id="CHEBI:29105"/>
        <label>2</label>
    </ligand>
</feature>
<feature type="binding site" evidence="1">
    <location>
        <position position="117"/>
    </location>
    <ligand>
        <name>Zn(2+)</name>
        <dbReference type="ChEBI" id="CHEBI:29105"/>
        <label>1</label>
    </ligand>
</feature>
<feature type="binding site" evidence="1">
    <location>
        <position position="134"/>
    </location>
    <ligand>
        <name>Zn(2+)</name>
        <dbReference type="ChEBI" id="CHEBI:29105"/>
        <label>1</label>
    </ligand>
</feature>
<feature type="binding site" evidence="1">
    <location>
        <position position="134"/>
    </location>
    <ligand>
        <name>Zn(2+)</name>
        <dbReference type="ChEBI" id="CHEBI:29105"/>
        <label>2</label>
    </ligand>
</feature>
<feature type="binding site" evidence="1">
    <location>
        <position position="172"/>
    </location>
    <ligand>
        <name>Zn(2+)</name>
        <dbReference type="ChEBI" id="CHEBI:29105"/>
        <label>2</label>
    </ligand>
</feature>